<dbReference type="EC" id="3.1.-.-" evidence="1"/>
<dbReference type="EMBL" id="CP000736">
    <property type="protein sequence ID" value="ABR52510.1"/>
    <property type="molecule type" value="Genomic_DNA"/>
</dbReference>
<dbReference type="SMR" id="A6U242"/>
<dbReference type="KEGG" id="sah:SaurJH1_1662"/>
<dbReference type="HOGENOM" id="CLU_106710_3_0_9"/>
<dbReference type="GO" id="GO:0005737">
    <property type="term" value="C:cytoplasm"/>
    <property type="evidence" value="ECO:0007669"/>
    <property type="project" value="UniProtKB-SubCell"/>
</dbReference>
<dbReference type="GO" id="GO:0004222">
    <property type="term" value="F:metalloendopeptidase activity"/>
    <property type="evidence" value="ECO:0007669"/>
    <property type="project" value="InterPro"/>
</dbReference>
<dbReference type="GO" id="GO:0004521">
    <property type="term" value="F:RNA endonuclease activity"/>
    <property type="evidence" value="ECO:0007669"/>
    <property type="project" value="UniProtKB-UniRule"/>
</dbReference>
<dbReference type="GO" id="GO:0008270">
    <property type="term" value="F:zinc ion binding"/>
    <property type="evidence" value="ECO:0007669"/>
    <property type="project" value="UniProtKB-UniRule"/>
</dbReference>
<dbReference type="GO" id="GO:0006364">
    <property type="term" value="P:rRNA processing"/>
    <property type="evidence" value="ECO:0007669"/>
    <property type="project" value="UniProtKB-UniRule"/>
</dbReference>
<dbReference type="Gene3D" id="3.40.390.30">
    <property type="entry name" value="Metalloproteases ('zincins'), catalytic domain"/>
    <property type="match status" value="1"/>
</dbReference>
<dbReference type="HAMAP" id="MF_00009">
    <property type="entry name" value="Endoribonucl_YbeY"/>
    <property type="match status" value="1"/>
</dbReference>
<dbReference type="InterPro" id="IPR023091">
    <property type="entry name" value="MetalPrtase_cat_dom_sf_prd"/>
</dbReference>
<dbReference type="InterPro" id="IPR002036">
    <property type="entry name" value="YbeY"/>
</dbReference>
<dbReference type="InterPro" id="IPR020549">
    <property type="entry name" value="YbeY_CS"/>
</dbReference>
<dbReference type="NCBIfam" id="TIGR00043">
    <property type="entry name" value="rRNA maturation RNase YbeY"/>
    <property type="match status" value="1"/>
</dbReference>
<dbReference type="PANTHER" id="PTHR46986">
    <property type="entry name" value="ENDORIBONUCLEASE YBEY, CHLOROPLASTIC"/>
    <property type="match status" value="1"/>
</dbReference>
<dbReference type="PANTHER" id="PTHR46986:SF1">
    <property type="entry name" value="ENDORIBONUCLEASE YBEY, CHLOROPLASTIC"/>
    <property type="match status" value="1"/>
</dbReference>
<dbReference type="Pfam" id="PF02130">
    <property type="entry name" value="YbeY"/>
    <property type="match status" value="1"/>
</dbReference>
<dbReference type="SUPFAM" id="SSF55486">
    <property type="entry name" value="Metalloproteases ('zincins'), catalytic domain"/>
    <property type="match status" value="1"/>
</dbReference>
<dbReference type="PROSITE" id="PS01306">
    <property type="entry name" value="UPF0054"/>
    <property type="match status" value="1"/>
</dbReference>
<evidence type="ECO:0000255" key="1">
    <source>
        <dbReference type="HAMAP-Rule" id="MF_00009"/>
    </source>
</evidence>
<comment type="function">
    <text evidence="1">Single strand-specific metallo-endoribonuclease involved in late-stage 70S ribosome quality control and in maturation of the 3' terminus of the 16S rRNA.</text>
</comment>
<comment type="cofactor">
    <cofactor evidence="1">
        <name>Zn(2+)</name>
        <dbReference type="ChEBI" id="CHEBI:29105"/>
    </cofactor>
    <text evidence="1">Binds 1 zinc ion.</text>
</comment>
<comment type="subcellular location">
    <subcellularLocation>
        <location evidence="1">Cytoplasm</location>
    </subcellularLocation>
</comment>
<comment type="similarity">
    <text evidence="1">Belongs to the endoribonuclease YbeY family.</text>
</comment>
<name>YBEY_STAA2</name>
<accession>A6U242</accession>
<gene>
    <name evidence="1" type="primary">ybeY</name>
    <name type="ordered locus">SaurJH1_1662</name>
</gene>
<organism>
    <name type="scientific">Staphylococcus aureus (strain JH1)</name>
    <dbReference type="NCBI Taxonomy" id="359787"/>
    <lineage>
        <taxon>Bacteria</taxon>
        <taxon>Bacillati</taxon>
        <taxon>Bacillota</taxon>
        <taxon>Bacilli</taxon>
        <taxon>Bacillales</taxon>
        <taxon>Staphylococcaceae</taxon>
        <taxon>Staphylococcus</taxon>
    </lineage>
</organism>
<reference key="1">
    <citation type="submission" date="2007-06" db="EMBL/GenBank/DDBJ databases">
        <title>Complete sequence of chromosome of Staphylococcus aureus subsp. aureus JH1.</title>
        <authorList>
            <consortium name="US DOE Joint Genome Institute"/>
            <person name="Copeland A."/>
            <person name="Lucas S."/>
            <person name="Lapidus A."/>
            <person name="Barry K."/>
            <person name="Detter J.C."/>
            <person name="Glavina del Rio T."/>
            <person name="Hammon N."/>
            <person name="Israni S."/>
            <person name="Dalin E."/>
            <person name="Tice H."/>
            <person name="Pitluck S."/>
            <person name="Chain P."/>
            <person name="Malfatti S."/>
            <person name="Shin M."/>
            <person name="Vergez L."/>
            <person name="Schmutz J."/>
            <person name="Larimer F."/>
            <person name="Land M."/>
            <person name="Hauser L."/>
            <person name="Kyrpides N."/>
            <person name="Ivanova N."/>
            <person name="Tomasz A."/>
            <person name="Richardson P."/>
        </authorList>
    </citation>
    <scope>NUCLEOTIDE SEQUENCE [LARGE SCALE GENOMIC DNA]</scope>
    <source>
        <strain>JH1</strain>
    </source>
</reference>
<feature type="chain" id="PRO_1000073920" description="Endoribonuclease YbeY">
    <location>
        <begin position="1"/>
        <end position="155"/>
    </location>
</feature>
<feature type="binding site" evidence="1">
    <location>
        <position position="120"/>
    </location>
    <ligand>
        <name>Zn(2+)</name>
        <dbReference type="ChEBI" id="CHEBI:29105"/>
        <note>catalytic</note>
    </ligand>
</feature>
<feature type="binding site" evidence="1">
    <location>
        <position position="124"/>
    </location>
    <ligand>
        <name>Zn(2+)</name>
        <dbReference type="ChEBI" id="CHEBI:29105"/>
        <note>catalytic</note>
    </ligand>
</feature>
<feature type="binding site" evidence="1">
    <location>
        <position position="130"/>
    </location>
    <ligand>
        <name>Zn(2+)</name>
        <dbReference type="ChEBI" id="CHEBI:29105"/>
        <note>catalytic</note>
    </ligand>
</feature>
<protein>
    <recommendedName>
        <fullName evidence="1">Endoribonuclease YbeY</fullName>
        <ecNumber evidence="1">3.1.-.-</ecNumber>
    </recommendedName>
</protein>
<proteinExistence type="inferred from homology"/>
<keyword id="KW-0963">Cytoplasm</keyword>
<keyword id="KW-0255">Endonuclease</keyword>
<keyword id="KW-0378">Hydrolase</keyword>
<keyword id="KW-0479">Metal-binding</keyword>
<keyword id="KW-0540">Nuclease</keyword>
<keyword id="KW-0690">Ribosome biogenesis</keyword>
<keyword id="KW-0698">rRNA processing</keyword>
<keyword id="KW-0862">Zinc</keyword>
<sequence>MFTIDFSDHTGLVKDAWYKQIEDLLEFAKKEEHIEDDAELSVTFVDKQEIQEINRTYRDKDKVTDVISFALEEDEPEIDFSGLDIPRVLGDIIICTDVAQEQANNYGHSFERELGFLALHGFLHLLGYDHMTEADEKEMFGRQDTILNAYGLTRD</sequence>